<reference key="1">
    <citation type="journal article" date="2009" name="Genome Biol.">
        <title>Genomic and genetic analyses of diversity and plant interactions of Pseudomonas fluorescens.</title>
        <authorList>
            <person name="Silby M.W."/>
            <person name="Cerdeno-Tarraga A.M."/>
            <person name="Vernikos G.S."/>
            <person name="Giddens S.R."/>
            <person name="Jackson R.W."/>
            <person name="Preston G.M."/>
            <person name="Zhang X.-X."/>
            <person name="Moon C.D."/>
            <person name="Gehrig S.M."/>
            <person name="Godfrey S.A.C."/>
            <person name="Knight C.G."/>
            <person name="Malone J.G."/>
            <person name="Robinson Z."/>
            <person name="Spiers A.J."/>
            <person name="Harris S."/>
            <person name="Challis G.L."/>
            <person name="Yaxley A.M."/>
            <person name="Harris D."/>
            <person name="Seeger K."/>
            <person name="Murphy L."/>
            <person name="Rutter S."/>
            <person name="Squares R."/>
            <person name="Quail M.A."/>
            <person name="Saunders E."/>
            <person name="Mavromatis K."/>
            <person name="Brettin T.S."/>
            <person name="Bentley S.D."/>
            <person name="Hothersall J."/>
            <person name="Stephens E."/>
            <person name="Thomas C.M."/>
            <person name="Parkhill J."/>
            <person name="Levy S.B."/>
            <person name="Rainey P.B."/>
            <person name="Thomson N.R."/>
        </authorList>
    </citation>
    <scope>NUCLEOTIDE SEQUENCE [LARGE SCALE GENOMIC DNA]</scope>
    <source>
        <strain>SBW25</strain>
    </source>
</reference>
<proteinExistence type="inferred from homology"/>
<accession>C3KDU4</accession>
<evidence type="ECO:0000255" key="1">
    <source>
        <dbReference type="HAMAP-Rule" id="MF_00365"/>
    </source>
</evidence>
<name>RECF_PSEFS</name>
<sequence length="367" mass="41546">MSLSRVSVTAVRNLHPVTFSPSPRINILHGANGSGKTSVLEAIHLLGLARSFRSARLLPVIQYEQLACTVFGQVELAEGGHSSLGISRDRGGEFQIRIDGQNARSAAQLAEILPLQLINPDSFRLLEGAPKIRRQFLDWGVFHVEPRFMATWQRLQKALRQRNSWLRHGTLDAASQAAWDRELCLASDEIDEYRRAYIKALKPVFEQTLSELLDLEGLTLSYYRGWDKERELSAVLATSLQRDQQIGHTQAGPQRADLRLRLGAHNAADILSRGQQKLVVCALRIAQGHLVSQARRGQCIYLVDDLPSELDEQHRRALCRLLEELRCQVFITCVDHELLREGWQTETPVALFHVEQGRITQTHDHRE</sequence>
<keyword id="KW-0067">ATP-binding</keyword>
<keyword id="KW-0963">Cytoplasm</keyword>
<keyword id="KW-0227">DNA damage</keyword>
<keyword id="KW-0234">DNA repair</keyword>
<keyword id="KW-0235">DNA replication</keyword>
<keyword id="KW-0238">DNA-binding</keyword>
<keyword id="KW-0547">Nucleotide-binding</keyword>
<keyword id="KW-0742">SOS response</keyword>
<protein>
    <recommendedName>
        <fullName evidence="1">DNA replication and repair protein RecF</fullName>
    </recommendedName>
</protein>
<gene>
    <name evidence="1" type="primary">recF</name>
    <name type="ordered locus">PFLU_0003</name>
</gene>
<comment type="function">
    <text evidence="1">The RecF protein is involved in DNA metabolism; it is required for DNA replication and normal SOS inducibility. RecF binds preferentially to single-stranded, linear DNA. It also seems to bind ATP.</text>
</comment>
<comment type="subcellular location">
    <subcellularLocation>
        <location evidence="1">Cytoplasm</location>
    </subcellularLocation>
</comment>
<comment type="similarity">
    <text evidence="1">Belongs to the RecF family.</text>
</comment>
<dbReference type="EMBL" id="AM181176">
    <property type="protein sequence ID" value="CAY46288.1"/>
    <property type="molecule type" value="Genomic_DNA"/>
</dbReference>
<dbReference type="RefSeq" id="WP_012721452.1">
    <property type="nucleotide sequence ID" value="NC_012660.1"/>
</dbReference>
<dbReference type="SMR" id="C3KDU4"/>
<dbReference type="STRING" id="294.SRM1_00058"/>
<dbReference type="GeneID" id="93461548"/>
<dbReference type="eggNOG" id="COG1195">
    <property type="taxonomic scope" value="Bacteria"/>
</dbReference>
<dbReference type="HOGENOM" id="CLU_040267_0_0_6"/>
<dbReference type="OrthoDB" id="9803889at2"/>
<dbReference type="GO" id="GO:0005737">
    <property type="term" value="C:cytoplasm"/>
    <property type="evidence" value="ECO:0007669"/>
    <property type="project" value="UniProtKB-SubCell"/>
</dbReference>
<dbReference type="GO" id="GO:0005524">
    <property type="term" value="F:ATP binding"/>
    <property type="evidence" value="ECO:0007669"/>
    <property type="project" value="UniProtKB-UniRule"/>
</dbReference>
<dbReference type="GO" id="GO:0003697">
    <property type="term" value="F:single-stranded DNA binding"/>
    <property type="evidence" value="ECO:0007669"/>
    <property type="project" value="UniProtKB-UniRule"/>
</dbReference>
<dbReference type="GO" id="GO:0006260">
    <property type="term" value="P:DNA replication"/>
    <property type="evidence" value="ECO:0007669"/>
    <property type="project" value="UniProtKB-UniRule"/>
</dbReference>
<dbReference type="GO" id="GO:0000731">
    <property type="term" value="P:DNA synthesis involved in DNA repair"/>
    <property type="evidence" value="ECO:0007669"/>
    <property type="project" value="TreeGrafter"/>
</dbReference>
<dbReference type="GO" id="GO:0006302">
    <property type="term" value="P:double-strand break repair"/>
    <property type="evidence" value="ECO:0007669"/>
    <property type="project" value="TreeGrafter"/>
</dbReference>
<dbReference type="GO" id="GO:0009432">
    <property type="term" value="P:SOS response"/>
    <property type="evidence" value="ECO:0007669"/>
    <property type="project" value="UniProtKB-UniRule"/>
</dbReference>
<dbReference type="FunFam" id="1.20.1050.90:FF:000003">
    <property type="entry name" value="DNA replication and repair protein RecF"/>
    <property type="match status" value="1"/>
</dbReference>
<dbReference type="Gene3D" id="3.40.50.300">
    <property type="entry name" value="P-loop containing nucleotide triphosphate hydrolases"/>
    <property type="match status" value="1"/>
</dbReference>
<dbReference type="Gene3D" id="1.20.1050.90">
    <property type="entry name" value="RecF/RecN/SMC, N-terminal domain"/>
    <property type="match status" value="1"/>
</dbReference>
<dbReference type="HAMAP" id="MF_00365">
    <property type="entry name" value="RecF"/>
    <property type="match status" value="1"/>
</dbReference>
<dbReference type="InterPro" id="IPR001238">
    <property type="entry name" value="DNA-binding_RecF"/>
</dbReference>
<dbReference type="InterPro" id="IPR018078">
    <property type="entry name" value="DNA-binding_RecF_CS"/>
</dbReference>
<dbReference type="InterPro" id="IPR027417">
    <property type="entry name" value="P-loop_NTPase"/>
</dbReference>
<dbReference type="InterPro" id="IPR003395">
    <property type="entry name" value="RecF/RecN/SMC_N"/>
</dbReference>
<dbReference type="InterPro" id="IPR042174">
    <property type="entry name" value="RecF_2"/>
</dbReference>
<dbReference type="NCBIfam" id="TIGR00611">
    <property type="entry name" value="recf"/>
    <property type="match status" value="1"/>
</dbReference>
<dbReference type="PANTHER" id="PTHR32182">
    <property type="entry name" value="DNA REPLICATION AND REPAIR PROTEIN RECF"/>
    <property type="match status" value="1"/>
</dbReference>
<dbReference type="PANTHER" id="PTHR32182:SF0">
    <property type="entry name" value="DNA REPLICATION AND REPAIR PROTEIN RECF"/>
    <property type="match status" value="1"/>
</dbReference>
<dbReference type="Pfam" id="PF02463">
    <property type="entry name" value="SMC_N"/>
    <property type="match status" value="1"/>
</dbReference>
<dbReference type="SUPFAM" id="SSF52540">
    <property type="entry name" value="P-loop containing nucleoside triphosphate hydrolases"/>
    <property type="match status" value="1"/>
</dbReference>
<dbReference type="PROSITE" id="PS00617">
    <property type="entry name" value="RECF_1"/>
    <property type="match status" value="1"/>
</dbReference>
<dbReference type="PROSITE" id="PS00618">
    <property type="entry name" value="RECF_2"/>
    <property type="match status" value="1"/>
</dbReference>
<organism>
    <name type="scientific">Pseudomonas fluorescens (strain SBW25)</name>
    <dbReference type="NCBI Taxonomy" id="216595"/>
    <lineage>
        <taxon>Bacteria</taxon>
        <taxon>Pseudomonadati</taxon>
        <taxon>Pseudomonadota</taxon>
        <taxon>Gammaproteobacteria</taxon>
        <taxon>Pseudomonadales</taxon>
        <taxon>Pseudomonadaceae</taxon>
        <taxon>Pseudomonas</taxon>
    </lineage>
</organism>
<feature type="chain" id="PRO_1000205501" description="DNA replication and repair protein RecF">
    <location>
        <begin position="1"/>
        <end position="367"/>
    </location>
</feature>
<feature type="binding site" evidence="1">
    <location>
        <begin position="30"/>
        <end position="37"/>
    </location>
    <ligand>
        <name>ATP</name>
        <dbReference type="ChEBI" id="CHEBI:30616"/>
    </ligand>
</feature>